<name>CATC_MACFA</name>
<reference key="1">
    <citation type="submission" date="2003-10" db="EMBL/GenBank/DDBJ databases">
        <title>Isolation and characterization of cDNA for macaque neurological disease genes.</title>
        <authorList>
            <person name="Kusuda J."/>
            <person name="Osada N."/>
            <person name="Tanuma R."/>
            <person name="Hirata M."/>
            <person name="Sugano S."/>
            <person name="Hashimoto K."/>
        </authorList>
    </citation>
    <scope>NUCLEOTIDE SEQUENCE [LARGE SCALE MRNA]</scope>
    <source>
        <tissue>Parietal cortex</tissue>
    </source>
</reference>
<feature type="signal peptide" evidence="2">
    <location>
        <begin position="1"/>
        <end position="24"/>
    </location>
</feature>
<feature type="chain" id="PRO_0000026342" description="Dipeptidyl peptidase 1 exclusion domain chain">
    <location>
        <begin position="25"/>
        <end position="134"/>
    </location>
</feature>
<feature type="propeptide" id="PRO_0000026343" evidence="2">
    <location>
        <begin position="135"/>
        <end position="230"/>
    </location>
</feature>
<feature type="chain" id="PRO_0000026344" description="Dipeptidyl peptidase 1 heavy chain" evidence="1 2">
    <location>
        <begin position="231"/>
        <end position="394"/>
    </location>
</feature>
<feature type="chain" id="PRO_0000026345" description="Dipeptidyl peptidase 1 light chain" evidence="2">
    <location>
        <begin position="395"/>
        <end position="463"/>
    </location>
</feature>
<feature type="active site" evidence="4">
    <location>
        <position position="258"/>
    </location>
</feature>
<feature type="active site" evidence="5">
    <location>
        <position position="405"/>
    </location>
</feature>
<feature type="active site" evidence="6">
    <location>
        <position position="427"/>
    </location>
</feature>
<feature type="binding site" evidence="2">
    <location>
        <position position="302"/>
    </location>
    <ligand>
        <name>chloride</name>
        <dbReference type="ChEBI" id="CHEBI:17996"/>
    </ligand>
</feature>
<feature type="binding site" evidence="2">
    <location>
        <position position="304"/>
    </location>
    <ligand>
        <name>chloride</name>
        <dbReference type="ChEBI" id="CHEBI:17996"/>
    </ligand>
</feature>
<feature type="binding site" evidence="2">
    <location>
        <position position="347"/>
    </location>
    <ligand>
        <name>chloride</name>
        <dbReference type="ChEBI" id="CHEBI:17996"/>
    </ligand>
</feature>
<feature type="glycosylation site" description="N-linked (GlcNAc...) asparagine" evidence="3">
    <location>
        <position position="29"/>
    </location>
</feature>
<feature type="glycosylation site" description="N-linked (GlcNAc...) asparagine" evidence="3">
    <location>
        <position position="53"/>
    </location>
</feature>
<feature type="glycosylation site" description="N-linked (GlcNAc...) asparagine" evidence="3">
    <location>
        <position position="119"/>
    </location>
</feature>
<feature type="glycosylation site" description="N-linked (GlcNAc...) asparagine" evidence="3">
    <location>
        <position position="276"/>
    </location>
</feature>
<feature type="disulfide bond" evidence="2">
    <location>
        <begin position="30"/>
        <end position="118"/>
    </location>
</feature>
<feature type="disulfide bond" evidence="2">
    <location>
        <begin position="54"/>
        <end position="136"/>
    </location>
</feature>
<feature type="disulfide bond" evidence="2">
    <location>
        <begin position="255"/>
        <end position="298"/>
    </location>
</feature>
<feature type="disulfide bond" evidence="2">
    <location>
        <begin position="291"/>
        <end position="331"/>
    </location>
</feature>
<feature type="disulfide bond" evidence="2">
    <location>
        <begin position="321"/>
        <end position="337"/>
    </location>
</feature>
<accession>Q60HG6</accession>
<comment type="function">
    <text evidence="2">Thiol protease. Has dipeptidylpeptidase activity. Active against a broad range of dipeptide substrates composed of both polar and hydrophobic amino acids. Proline cannot occupy the P1 position and arginine cannot occupy the P2 position of the substrate. Can act as both an exopeptidase and endopeptidase. Activates serine proteases such as elastase, cathepsin G and granzymes A and B.</text>
</comment>
<comment type="catalytic activity">
    <reaction evidence="2">
        <text>Release of an N-terminal dipeptide, Xaa-Yaa-|-Zaa-, except when Xaa is Arg or Lys, or Yaa or Zaa is Pro.</text>
        <dbReference type="EC" id="3.4.14.1"/>
    </reaction>
</comment>
<comment type="cofactor">
    <cofactor evidence="2">
        <name>chloride</name>
        <dbReference type="ChEBI" id="CHEBI:17996"/>
    </cofactor>
    <text evidence="2">Binds 1 Cl(-) ion per heavy chain.</text>
</comment>
<comment type="subunit">
    <text evidence="2">Tetramer of heterotrimers consisting of exclusion domain, heavy- and light chains.</text>
</comment>
<comment type="subcellular location">
    <subcellularLocation>
        <location evidence="2">Lysosome</location>
    </subcellularLocation>
</comment>
<comment type="similarity">
    <text evidence="4 5 6">Belongs to the peptidase C1 family.</text>
</comment>
<gene>
    <name type="primary">CTSC</name>
    <name type="ORF">QnpA-12394</name>
</gene>
<sequence>MGVGPASLLAALLLLLSGDRAVRCDTPANCTYLDLLGTWVFQVGSSGSLRDVNCSVMGPPEKKVVVHLQKLDTAYDDLGNSGHFTIIYNQGFEIVLNDYKWFAFFKYKEEGIKVTIYCNETMTGWVHDVLGRNWACFTGKKVGTASENVYVNTAHLKNSQEKYSNRLYKYDHNFVKAINAIQKSWTATTYMEYETLTLGDMIKRSGGHSRKIPRPKPTPLTAEIQQKILHLPTSWDWRNVHGINFVSPVRNQASCGSCYSFASVGMLEARIRILTNNSQTPILSSQEVVSCSQYAQGCEGGFPYLTAGKYAQDFGLVEEACFPYTGTDSPCKMKEDCFRYYSSEYHYVGGFYGGCNEALMKLELVYHGPLAVAFEVYDDFLHYQNGIYHHTGLRDPFNPFELTNHAVLLVGYGTDSASGMDYWIVKNSWGTSWGEDGYFRIRRGTDECAIESIAVAATPIPKL</sequence>
<keyword id="KW-0868">Chloride</keyword>
<keyword id="KW-1015">Disulfide bond</keyword>
<keyword id="KW-0325">Glycoprotein</keyword>
<keyword id="KW-0378">Hydrolase</keyword>
<keyword id="KW-0458">Lysosome</keyword>
<keyword id="KW-0645">Protease</keyword>
<keyword id="KW-1185">Reference proteome</keyword>
<keyword id="KW-0732">Signal</keyword>
<keyword id="KW-0788">Thiol protease</keyword>
<keyword id="KW-0865">Zymogen</keyword>
<protein>
    <recommendedName>
        <fullName>Dipeptidyl peptidase 1</fullName>
        <ecNumber>3.4.14.1</ecNumber>
    </recommendedName>
    <alternativeName>
        <fullName>Cathepsin C</fullName>
    </alternativeName>
    <alternativeName>
        <fullName>Cathepsin J</fullName>
    </alternativeName>
    <alternativeName>
        <fullName>Dipeptidyl peptidase I</fullName>
        <shortName>DPP-I</shortName>
        <shortName>DPPI</shortName>
    </alternativeName>
    <alternativeName>
        <fullName>Dipeptidyl transferase</fullName>
    </alternativeName>
    <component>
        <recommendedName>
            <fullName>Dipeptidyl peptidase 1 exclusion domain chain</fullName>
        </recommendedName>
        <alternativeName>
            <fullName>Dipeptidyl peptidase I exclusion domain chain</fullName>
        </alternativeName>
    </component>
    <component>
        <recommendedName>
            <fullName>Dipeptidyl peptidase 1 heavy chain</fullName>
        </recommendedName>
        <alternativeName>
            <fullName>Dipeptidyl peptidase I heavy chain</fullName>
        </alternativeName>
    </component>
    <component>
        <recommendedName>
            <fullName>Dipeptidyl peptidase 1 light chain</fullName>
        </recommendedName>
        <alternativeName>
            <fullName>Dipeptidyl peptidase I light chain</fullName>
        </alternativeName>
    </component>
</protein>
<organism>
    <name type="scientific">Macaca fascicularis</name>
    <name type="common">Crab-eating macaque</name>
    <name type="synonym">Cynomolgus monkey</name>
    <dbReference type="NCBI Taxonomy" id="9541"/>
    <lineage>
        <taxon>Eukaryota</taxon>
        <taxon>Metazoa</taxon>
        <taxon>Chordata</taxon>
        <taxon>Craniata</taxon>
        <taxon>Vertebrata</taxon>
        <taxon>Euteleostomi</taxon>
        <taxon>Mammalia</taxon>
        <taxon>Eutheria</taxon>
        <taxon>Euarchontoglires</taxon>
        <taxon>Primates</taxon>
        <taxon>Haplorrhini</taxon>
        <taxon>Catarrhini</taxon>
        <taxon>Cercopithecidae</taxon>
        <taxon>Cercopithecinae</taxon>
        <taxon>Macaca</taxon>
    </lineage>
</organism>
<proteinExistence type="evidence at transcript level"/>
<dbReference type="EC" id="3.4.14.1"/>
<dbReference type="EMBL" id="AB125161">
    <property type="protein sequence ID" value="BAD51949.1"/>
    <property type="molecule type" value="mRNA"/>
</dbReference>
<dbReference type="RefSeq" id="NP_001270292.1">
    <property type="nucleotide sequence ID" value="NM_001283363.1"/>
</dbReference>
<dbReference type="SMR" id="Q60HG6"/>
<dbReference type="STRING" id="9541.ENSMFAP00000017123"/>
<dbReference type="MEROPS" id="C01.070"/>
<dbReference type="GlyCosmos" id="Q60HG6">
    <property type="glycosylation" value="4 sites, No reported glycans"/>
</dbReference>
<dbReference type="eggNOG" id="KOG1543">
    <property type="taxonomic scope" value="Eukaryota"/>
</dbReference>
<dbReference type="Proteomes" id="UP000233100">
    <property type="component" value="Unplaced"/>
</dbReference>
<dbReference type="GO" id="GO:0005764">
    <property type="term" value="C:lysosome"/>
    <property type="evidence" value="ECO:0007669"/>
    <property type="project" value="UniProtKB-SubCell"/>
</dbReference>
<dbReference type="GO" id="GO:0008234">
    <property type="term" value="F:cysteine-type peptidase activity"/>
    <property type="evidence" value="ECO:0007669"/>
    <property type="project" value="UniProtKB-KW"/>
</dbReference>
<dbReference type="GO" id="GO:0008239">
    <property type="term" value="F:dipeptidyl-peptidase activity"/>
    <property type="evidence" value="ECO:0007669"/>
    <property type="project" value="UniProtKB-EC"/>
</dbReference>
<dbReference type="GO" id="GO:0006508">
    <property type="term" value="P:proteolysis"/>
    <property type="evidence" value="ECO:0007669"/>
    <property type="project" value="UniProtKB-KW"/>
</dbReference>
<dbReference type="CDD" id="cd02621">
    <property type="entry name" value="Peptidase_C1A_CathepsinC"/>
    <property type="match status" value="1"/>
</dbReference>
<dbReference type="FunFam" id="2.40.128.80:FF:000001">
    <property type="entry name" value="Dipeptidyl peptidase 1"/>
    <property type="match status" value="1"/>
</dbReference>
<dbReference type="FunFam" id="3.90.70.10:FF:000062">
    <property type="entry name" value="Dipeptidyl peptidase 1"/>
    <property type="match status" value="1"/>
</dbReference>
<dbReference type="Gene3D" id="2.40.128.80">
    <property type="entry name" value="Cathepsin C, exclusion domain"/>
    <property type="match status" value="1"/>
</dbReference>
<dbReference type="Gene3D" id="3.90.70.10">
    <property type="entry name" value="Cysteine proteinases"/>
    <property type="match status" value="1"/>
</dbReference>
<dbReference type="InterPro" id="IPR039412">
    <property type="entry name" value="CatC"/>
</dbReference>
<dbReference type="InterPro" id="IPR014882">
    <property type="entry name" value="CathepsinC_exc"/>
</dbReference>
<dbReference type="InterPro" id="IPR036496">
    <property type="entry name" value="CathepsinC_exc_dom_sf"/>
</dbReference>
<dbReference type="InterPro" id="IPR038765">
    <property type="entry name" value="Papain-like_cys_pep_sf"/>
</dbReference>
<dbReference type="InterPro" id="IPR025661">
    <property type="entry name" value="Pept_asp_AS"/>
</dbReference>
<dbReference type="InterPro" id="IPR000169">
    <property type="entry name" value="Pept_cys_AS"/>
</dbReference>
<dbReference type="InterPro" id="IPR025660">
    <property type="entry name" value="Pept_his_AS"/>
</dbReference>
<dbReference type="InterPro" id="IPR013128">
    <property type="entry name" value="Peptidase_C1A"/>
</dbReference>
<dbReference type="InterPro" id="IPR000668">
    <property type="entry name" value="Peptidase_C1A_C"/>
</dbReference>
<dbReference type="PANTHER" id="PTHR12411">
    <property type="entry name" value="CYSTEINE PROTEASE FAMILY C1-RELATED"/>
    <property type="match status" value="1"/>
</dbReference>
<dbReference type="Pfam" id="PF08773">
    <property type="entry name" value="CathepsinC_exc"/>
    <property type="match status" value="1"/>
</dbReference>
<dbReference type="Pfam" id="PF00112">
    <property type="entry name" value="Peptidase_C1"/>
    <property type="match status" value="1"/>
</dbReference>
<dbReference type="PRINTS" id="PR00705">
    <property type="entry name" value="PAPAIN"/>
</dbReference>
<dbReference type="SMART" id="SM00645">
    <property type="entry name" value="Pept_C1"/>
    <property type="match status" value="1"/>
</dbReference>
<dbReference type="SUPFAM" id="SSF54001">
    <property type="entry name" value="Cysteine proteinases"/>
    <property type="match status" value="1"/>
</dbReference>
<dbReference type="SUPFAM" id="SSF75001">
    <property type="entry name" value="Dipeptidyl peptidase I (cathepsin C), exclusion domain"/>
    <property type="match status" value="1"/>
</dbReference>
<dbReference type="PROSITE" id="PS00640">
    <property type="entry name" value="THIOL_PROTEASE_ASN"/>
    <property type="match status" value="1"/>
</dbReference>
<dbReference type="PROSITE" id="PS00139">
    <property type="entry name" value="THIOL_PROTEASE_CYS"/>
    <property type="match status" value="1"/>
</dbReference>
<dbReference type="PROSITE" id="PS00639">
    <property type="entry name" value="THIOL_PROTEASE_HIS"/>
    <property type="match status" value="1"/>
</dbReference>
<evidence type="ECO:0000250" key="1"/>
<evidence type="ECO:0000250" key="2">
    <source>
        <dbReference type="UniProtKB" id="P53634"/>
    </source>
</evidence>
<evidence type="ECO:0000255" key="3"/>
<evidence type="ECO:0000255" key="4">
    <source>
        <dbReference type="PROSITE-ProRule" id="PRU10088"/>
    </source>
</evidence>
<evidence type="ECO:0000255" key="5">
    <source>
        <dbReference type="PROSITE-ProRule" id="PRU10089"/>
    </source>
</evidence>
<evidence type="ECO:0000255" key="6">
    <source>
        <dbReference type="PROSITE-ProRule" id="PRU10090"/>
    </source>
</evidence>